<comment type="function">
    <text evidence="2">Forms a water channel that facilitates the transport of water across cell membranes, playing a crucial role in water homeostasis in various tissues. Could also be permeable to small solutes including hydrogen peroxide, glycerol and gases such as amonnia (NH3), nitric oxide (NO) and carbon dioxide (CO2). Recruited to the ankyrin-1 complex, a multiprotein complex of the erythrocyte membrane, it could be part of a CO2 metabolon, linking facilitated diffusion of CO2 across the membrane, anion exchange of Cl(-)/HCO3(-) and interconversion of dissolved CO2 and carbonic acid in the cytosol. In vitro, it shows non-selective gated cation channel activity and may be permeable to cations like K(+) and Na(+) in vivo.</text>
</comment>
<comment type="catalytic activity">
    <reaction evidence="2">
        <text>H2O(in) = H2O(out)</text>
        <dbReference type="Rhea" id="RHEA:29667"/>
        <dbReference type="ChEBI" id="CHEBI:15377"/>
    </reaction>
</comment>
<comment type="catalytic activity">
    <reaction evidence="2">
        <text>nitric oxide(out) = nitric oxide(in)</text>
        <dbReference type="Rhea" id="RHEA:74895"/>
        <dbReference type="ChEBI" id="CHEBI:16480"/>
    </reaction>
</comment>
<comment type="catalytic activity">
    <reaction evidence="2">
        <text>CO2(out) = CO2(in)</text>
        <dbReference type="Rhea" id="RHEA:74891"/>
        <dbReference type="ChEBI" id="CHEBI:16526"/>
    </reaction>
</comment>
<comment type="catalytic activity">
    <reaction evidence="2">
        <text>glycerol(in) = glycerol(out)</text>
        <dbReference type="Rhea" id="RHEA:29675"/>
        <dbReference type="ChEBI" id="CHEBI:17754"/>
    </reaction>
</comment>
<comment type="catalytic activity">
    <reaction evidence="2">
        <text>H2O2(out) = H2O2(in)</text>
        <dbReference type="Rhea" id="RHEA:74375"/>
        <dbReference type="ChEBI" id="CHEBI:16240"/>
    </reaction>
</comment>
<comment type="catalytic activity">
    <reaction evidence="2">
        <text>K(+)(in) = K(+)(out)</text>
        <dbReference type="Rhea" id="RHEA:29463"/>
        <dbReference type="ChEBI" id="CHEBI:29103"/>
    </reaction>
</comment>
<comment type="catalytic activity">
    <reaction evidence="2">
        <text>Na(+)(in) = Na(+)(out)</text>
        <dbReference type="Rhea" id="RHEA:34963"/>
        <dbReference type="ChEBI" id="CHEBI:29101"/>
    </reaction>
</comment>
<comment type="subunit">
    <text evidence="1 2 3">Homotetramer; each monomer provides an independent water pore. Component of the ankyrin-1 complex in the erythrocyte, composed of ANK1, RHCE, RHAG, SLC4A1, EPB42, GYPA, GYPB and AQP1 (By similarity). Interacts with EPHB2; involved in endolymph production in the inner ear (By similarity). Identified in a complex with STOM. Interacts (via the N-terminal) with ANK1 (via ANK 1-5 repeats). Interacts (via the C-terminal) with EPB42 (By similarity).</text>
</comment>
<comment type="subcellular location">
    <subcellularLocation>
        <location evidence="2">Cell membrane</location>
        <topology evidence="2">Multi-pass membrane protein</topology>
    </subcellularLocation>
</comment>
<comment type="domain">
    <text evidence="2">Aquaporins contain two tandem repeats each containing three membrane-spanning domains and a pore-forming loop with the signature motif Asn-Pro-Ala (NPA).</text>
</comment>
<comment type="similarity">
    <text evidence="5">Belongs to the MIP/aquaporin (TC 1.A.8) family.</text>
</comment>
<evidence type="ECO:0000250" key="1"/>
<evidence type="ECO:0000250" key="2">
    <source>
        <dbReference type="UniProtKB" id="P29972"/>
    </source>
</evidence>
<evidence type="ECO:0000250" key="3">
    <source>
        <dbReference type="UniProtKB" id="Q02013"/>
    </source>
</evidence>
<evidence type="ECO:0000255" key="4"/>
<evidence type="ECO:0000305" key="5"/>
<feature type="chain" id="PRO_0000063923" description="Aquaporin-1">
    <location>
        <begin position="1"/>
        <end position="269"/>
    </location>
</feature>
<feature type="topological domain" description="Cytoplasmic" evidence="5">
    <location>
        <begin position="1"/>
        <end position="11"/>
    </location>
</feature>
<feature type="transmembrane region" description="Helical; Name=Helix 1" evidence="2">
    <location>
        <begin position="12"/>
        <end position="29"/>
    </location>
</feature>
<feature type="topological domain" description="Extracellular" evidence="5">
    <location>
        <begin position="30"/>
        <end position="46"/>
    </location>
</feature>
<feature type="transmembrane region" description="Helical; Name=Helix 2" evidence="2">
    <location>
        <begin position="47"/>
        <end position="65"/>
    </location>
</feature>
<feature type="topological domain" description="Cytoplasmic" evidence="5">
    <location>
        <begin position="66"/>
        <end position="68"/>
    </location>
</feature>
<feature type="intramembrane region" evidence="2">
    <location>
        <begin position="69"/>
        <end position="82"/>
    </location>
</feature>
<feature type="topological domain" description="Cytoplasmic" evidence="5">
    <location>
        <begin position="83"/>
        <end position="90"/>
    </location>
</feature>
<feature type="transmembrane region" description="Helical; Name=Helix 3" evidence="2">
    <location>
        <begin position="91"/>
        <end position="109"/>
    </location>
</feature>
<feature type="topological domain" description="Extracellular" evidence="5">
    <location>
        <begin position="110"/>
        <end position="133"/>
    </location>
</feature>
<feature type="transmembrane region" description="Helical; Name=Helix 4" evidence="2">
    <location>
        <begin position="134"/>
        <end position="153"/>
    </location>
</feature>
<feature type="topological domain" description="Cytoplasmic" evidence="5">
    <location>
        <begin position="154"/>
        <end position="163"/>
    </location>
</feature>
<feature type="transmembrane region" description="Helical; Name=Helix 5" evidence="2">
    <location>
        <begin position="164"/>
        <end position="181"/>
    </location>
</feature>
<feature type="topological domain" description="Extracellular" evidence="5">
    <location>
        <begin position="182"/>
        <end position="186"/>
    </location>
</feature>
<feature type="intramembrane region" evidence="2">
    <location>
        <begin position="187"/>
        <end position="199"/>
    </location>
</feature>
<feature type="topological domain" description="Extracellular" evidence="5">
    <location>
        <begin position="200"/>
        <end position="206"/>
    </location>
</feature>
<feature type="transmembrane region" description="Helical; Name=Helix 6" evidence="2">
    <location>
        <begin position="207"/>
        <end position="224"/>
    </location>
</feature>
<feature type="topological domain" description="Cytoplasmic" evidence="5">
    <location>
        <begin position="225"/>
        <end position="269"/>
    </location>
</feature>
<feature type="short sequence motif" description="NPA 1" evidence="2">
    <location>
        <begin position="76"/>
        <end position="78"/>
    </location>
</feature>
<feature type="short sequence motif" description="NPA 2" evidence="2">
    <location>
        <begin position="192"/>
        <end position="194"/>
    </location>
</feature>
<feature type="modified residue" description="Phosphoserine" evidence="3">
    <location>
        <position position="247"/>
    </location>
</feature>
<feature type="modified residue" description="Phosphotyrosine" evidence="3">
    <location>
        <position position="253"/>
    </location>
</feature>
<feature type="modified residue" description="Phosphoserine" evidence="3">
    <location>
        <position position="262"/>
    </location>
</feature>
<feature type="glycosylation site" description="N-linked (GlcNAc...) asparagine" evidence="4">
    <location>
        <position position="42"/>
    </location>
</feature>
<feature type="glycosylation site" description="N-linked (GlcNAc...) asparagine" evidence="4">
    <location>
        <position position="205"/>
    </location>
</feature>
<name>AQP1_PONAB</name>
<dbReference type="EMBL" id="CR859936">
    <property type="protein sequence ID" value="CAH92091.1"/>
    <property type="molecule type" value="mRNA"/>
</dbReference>
<dbReference type="RefSeq" id="NP_001126220.1">
    <property type="nucleotide sequence ID" value="NM_001132748.2"/>
</dbReference>
<dbReference type="SMR" id="Q5R819"/>
<dbReference type="FunCoup" id="Q5R819">
    <property type="interactions" value="114"/>
</dbReference>
<dbReference type="STRING" id="9601.ENSPPYP00000019805"/>
<dbReference type="GlyCosmos" id="Q5R819">
    <property type="glycosylation" value="2 sites, No reported glycans"/>
</dbReference>
<dbReference type="Ensembl" id="ENSPPYT00000020587.3">
    <property type="protein sequence ID" value="ENSPPYP00000019805.3"/>
    <property type="gene ID" value="ENSPPYG00000017669.3"/>
</dbReference>
<dbReference type="GeneID" id="100173189"/>
<dbReference type="KEGG" id="pon:100173189"/>
<dbReference type="CTD" id="358"/>
<dbReference type="eggNOG" id="KOG0223">
    <property type="taxonomic scope" value="Eukaryota"/>
</dbReference>
<dbReference type="GeneTree" id="ENSGT00940000157015"/>
<dbReference type="InParanoid" id="Q5R819"/>
<dbReference type="OMA" id="FKKKMFW"/>
<dbReference type="OrthoDB" id="3222at2759"/>
<dbReference type="Proteomes" id="UP000001595">
    <property type="component" value="Chromosome 7"/>
</dbReference>
<dbReference type="GO" id="GO:0170014">
    <property type="term" value="C:ankyrin-1 complex"/>
    <property type="evidence" value="ECO:0000250"/>
    <property type="project" value="UniProtKB"/>
</dbReference>
<dbReference type="GO" id="GO:0045177">
    <property type="term" value="C:apical part of cell"/>
    <property type="evidence" value="ECO:0000250"/>
    <property type="project" value="UniProtKB"/>
</dbReference>
<dbReference type="GO" id="GO:0016324">
    <property type="term" value="C:apical plasma membrane"/>
    <property type="evidence" value="ECO:0000250"/>
    <property type="project" value="UniProtKB"/>
</dbReference>
<dbReference type="GO" id="GO:0030424">
    <property type="term" value="C:axon"/>
    <property type="evidence" value="ECO:0007669"/>
    <property type="project" value="Ensembl"/>
</dbReference>
<dbReference type="GO" id="GO:0009925">
    <property type="term" value="C:basal plasma membrane"/>
    <property type="evidence" value="ECO:0000250"/>
    <property type="project" value="UniProtKB"/>
</dbReference>
<dbReference type="GO" id="GO:0016323">
    <property type="term" value="C:basolateral plasma membrane"/>
    <property type="evidence" value="ECO:0000250"/>
    <property type="project" value="UniProtKB"/>
</dbReference>
<dbReference type="GO" id="GO:0005903">
    <property type="term" value="C:brush border"/>
    <property type="evidence" value="ECO:0000250"/>
    <property type="project" value="UniProtKB"/>
</dbReference>
<dbReference type="GO" id="GO:0031526">
    <property type="term" value="C:brush border membrane"/>
    <property type="evidence" value="ECO:0000250"/>
    <property type="project" value="UniProtKB"/>
</dbReference>
<dbReference type="GO" id="GO:0005901">
    <property type="term" value="C:caveola"/>
    <property type="evidence" value="ECO:0007669"/>
    <property type="project" value="Ensembl"/>
</dbReference>
<dbReference type="GO" id="GO:0005737">
    <property type="term" value="C:cytoplasm"/>
    <property type="evidence" value="ECO:0000250"/>
    <property type="project" value="UniProtKB"/>
</dbReference>
<dbReference type="GO" id="GO:0070062">
    <property type="term" value="C:extracellular exosome"/>
    <property type="evidence" value="ECO:0007669"/>
    <property type="project" value="Ensembl"/>
</dbReference>
<dbReference type="GO" id="GO:0031965">
    <property type="term" value="C:nuclear membrane"/>
    <property type="evidence" value="ECO:0000250"/>
    <property type="project" value="UniProtKB"/>
</dbReference>
<dbReference type="GO" id="GO:0005634">
    <property type="term" value="C:nucleus"/>
    <property type="evidence" value="ECO:0000250"/>
    <property type="project" value="UniProtKB"/>
</dbReference>
<dbReference type="GO" id="GO:0005886">
    <property type="term" value="C:plasma membrane"/>
    <property type="evidence" value="ECO:0000250"/>
    <property type="project" value="UniProtKB"/>
</dbReference>
<dbReference type="GO" id="GO:0042383">
    <property type="term" value="C:sarcolemma"/>
    <property type="evidence" value="ECO:0000250"/>
    <property type="project" value="UniProtKB"/>
</dbReference>
<dbReference type="GO" id="GO:0008519">
    <property type="term" value="F:ammonium channel activity"/>
    <property type="evidence" value="ECO:0000250"/>
    <property type="project" value="UniProtKB"/>
</dbReference>
<dbReference type="GO" id="GO:0035379">
    <property type="term" value="F:carbon dioxide transmembrane transporter activity"/>
    <property type="evidence" value="ECO:0000250"/>
    <property type="project" value="UniProtKB"/>
</dbReference>
<dbReference type="GO" id="GO:0046875">
    <property type="term" value="F:ephrin receptor binding"/>
    <property type="evidence" value="ECO:0007669"/>
    <property type="project" value="Ensembl"/>
</dbReference>
<dbReference type="GO" id="GO:0015168">
    <property type="term" value="F:glycerol transmembrane transporter activity"/>
    <property type="evidence" value="ECO:0000250"/>
    <property type="project" value="UniProtKB"/>
</dbReference>
<dbReference type="GO" id="GO:0140070">
    <property type="term" value="F:hydrogen peroxide channel activity"/>
    <property type="evidence" value="ECO:0007669"/>
    <property type="project" value="Ensembl"/>
</dbReference>
<dbReference type="GO" id="GO:0042802">
    <property type="term" value="F:identical protein binding"/>
    <property type="evidence" value="ECO:0007669"/>
    <property type="project" value="Ensembl"/>
</dbReference>
<dbReference type="GO" id="GO:0005223">
    <property type="term" value="F:intracellularly cGMP-activated cation channel activity"/>
    <property type="evidence" value="ECO:0000250"/>
    <property type="project" value="UniProtKB"/>
</dbReference>
<dbReference type="GO" id="GO:0030184">
    <property type="term" value="F:nitric oxide transmembrane transporter activity"/>
    <property type="evidence" value="ECO:0000250"/>
    <property type="project" value="UniProtKB"/>
</dbReference>
<dbReference type="GO" id="GO:0005267">
    <property type="term" value="F:potassium channel activity"/>
    <property type="evidence" value="ECO:0000250"/>
    <property type="project" value="UniProtKB"/>
</dbReference>
<dbReference type="GO" id="GO:0022857">
    <property type="term" value="F:transmembrane transporter activity"/>
    <property type="evidence" value="ECO:0000250"/>
    <property type="project" value="UniProtKB"/>
</dbReference>
<dbReference type="GO" id="GO:0015250">
    <property type="term" value="F:water channel activity"/>
    <property type="evidence" value="ECO:0000250"/>
    <property type="project" value="UniProtKB"/>
</dbReference>
<dbReference type="GO" id="GO:0005372">
    <property type="term" value="F:water transmembrane transporter activity"/>
    <property type="evidence" value="ECO:0000250"/>
    <property type="project" value="UniProtKB"/>
</dbReference>
<dbReference type="GO" id="GO:0072488">
    <property type="term" value="P:ammonium transmembrane transport"/>
    <property type="evidence" value="ECO:0000250"/>
    <property type="project" value="UniProtKB"/>
</dbReference>
<dbReference type="GO" id="GO:0048593">
    <property type="term" value="P:camera-type eye morphogenesis"/>
    <property type="evidence" value="ECO:0007669"/>
    <property type="project" value="Ensembl"/>
</dbReference>
<dbReference type="GO" id="GO:0035378">
    <property type="term" value="P:carbon dioxide transmembrane transport"/>
    <property type="evidence" value="ECO:0000250"/>
    <property type="project" value="UniProtKB"/>
</dbReference>
<dbReference type="GO" id="GO:0015670">
    <property type="term" value="P:carbon dioxide transport"/>
    <property type="evidence" value="ECO:0000250"/>
    <property type="project" value="UniProtKB"/>
</dbReference>
<dbReference type="GO" id="GO:0006884">
    <property type="term" value="P:cell volume homeostasis"/>
    <property type="evidence" value="ECO:0000250"/>
    <property type="project" value="UniProtKB"/>
</dbReference>
<dbReference type="GO" id="GO:0019725">
    <property type="term" value="P:cellular homeostasis"/>
    <property type="evidence" value="ECO:0000250"/>
    <property type="project" value="UniProtKB"/>
</dbReference>
<dbReference type="GO" id="GO:0071474">
    <property type="term" value="P:cellular hyperosmotic response"/>
    <property type="evidence" value="ECO:0000250"/>
    <property type="project" value="UniProtKB"/>
</dbReference>
<dbReference type="GO" id="GO:0071320">
    <property type="term" value="P:cellular response to cAMP"/>
    <property type="evidence" value="ECO:0000250"/>
    <property type="project" value="UniProtKB"/>
</dbReference>
<dbReference type="GO" id="GO:0071280">
    <property type="term" value="P:cellular response to copper ion"/>
    <property type="evidence" value="ECO:0000250"/>
    <property type="project" value="UniProtKB"/>
</dbReference>
<dbReference type="GO" id="GO:0071549">
    <property type="term" value="P:cellular response to dexamethasone stimulus"/>
    <property type="evidence" value="ECO:0000250"/>
    <property type="project" value="UniProtKB"/>
</dbReference>
<dbReference type="GO" id="GO:0070301">
    <property type="term" value="P:cellular response to hydrogen peroxide"/>
    <property type="evidence" value="ECO:0000250"/>
    <property type="project" value="UniProtKB"/>
</dbReference>
<dbReference type="GO" id="GO:0071456">
    <property type="term" value="P:cellular response to hypoxia"/>
    <property type="evidence" value="ECO:0000250"/>
    <property type="project" value="UniProtKB"/>
</dbReference>
<dbReference type="GO" id="GO:0071260">
    <property type="term" value="P:cellular response to mechanical stimulus"/>
    <property type="evidence" value="ECO:0000250"/>
    <property type="project" value="UniProtKB"/>
</dbReference>
<dbReference type="GO" id="GO:0071288">
    <property type="term" value="P:cellular response to mercury ion"/>
    <property type="evidence" value="ECO:0000250"/>
    <property type="project" value="UniProtKB"/>
</dbReference>
<dbReference type="GO" id="GO:0071732">
    <property type="term" value="P:cellular response to nitric oxide"/>
    <property type="evidence" value="ECO:0007669"/>
    <property type="project" value="Ensembl"/>
</dbReference>
<dbReference type="GO" id="GO:0071300">
    <property type="term" value="P:cellular response to retinoic acid"/>
    <property type="evidence" value="ECO:0000250"/>
    <property type="project" value="UniProtKB"/>
</dbReference>
<dbReference type="GO" id="GO:0071472">
    <property type="term" value="P:cellular response to salt stress"/>
    <property type="evidence" value="ECO:0000250"/>
    <property type="project" value="UniProtKB"/>
</dbReference>
<dbReference type="GO" id="GO:0034644">
    <property type="term" value="P:cellular response to UV"/>
    <property type="evidence" value="ECO:0000250"/>
    <property type="project" value="UniProtKB"/>
</dbReference>
<dbReference type="GO" id="GO:0033326">
    <property type="term" value="P:cerebrospinal fluid secretion"/>
    <property type="evidence" value="ECO:0007669"/>
    <property type="project" value="Ensembl"/>
</dbReference>
<dbReference type="GO" id="GO:0019934">
    <property type="term" value="P:cGMP-mediated signaling"/>
    <property type="evidence" value="ECO:0000250"/>
    <property type="project" value="UniProtKB"/>
</dbReference>
<dbReference type="GO" id="GO:0051458">
    <property type="term" value="P:corticotropin secretion"/>
    <property type="evidence" value="ECO:0007669"/>
    <property type="project" value="Ensembl"/>
</dbReference>
<dbReference type="GO" id="GO:0050829">
    <property type="term" value="P:defense response to Gram-negative bacterium"/>
    <property type="evidence" value="ECO:0007669"/>
    <property type="project" value="Ensembl"/>
</dbReference>
<dbReference type="GO" id="GO:0051649">
    <property type="term" value="P:establishment of localization in cell"/>
    <property type="evidence" value="ECO:0007669"/>
    <property type="project" value="Ensembl"/>
</dbReference>
<dbReference type="GO" id="GO:0030950">
    <property type="term" value="P:establishment or maintenance of actin cytoskeleton polarity"/>
    <property type="evidence" value="ECO:0000250"/>
    <property type="project" value="UniProtKB"/>
</dbReference>
<dbReference type="GO" id="GO:0010761">
    <property type="term" value="P:fibroblast migration"/>
    <property type="evidence" value="ECO:0007669"/>
    <property type="project" value="Ensembl"/>
</dbReference>
<dbReference type="GO" id="GO:0003094">
    <property type="term" value="P:glomerular filtration"/>
    <property type="evidence" value="ECO:0007669"/>
    <property type="project" value="Ensembl"/>
</dbReference>
<dbReference type="GO" id="GO:0015793">
    <property type="term" value="P:glycerol transmembrane transport"/>
    <property type="evidence" value="ECO:0000250"/>
    <property type="project" value="UniProtKB"/>
</dbReference>
<dbReference type="GO" id="GO:0009992">
    <property type="term" value="P:intracellular water homeostasis"/>
    <property type="evidence" value="ECO:0000250"/>
    <property type="project" value="UniProtKB"/>
</dbReference>
<dbReference type="GO" id="GO:0021670">
    <property type="term" value="P:lateral ventricle development"/>
    <property type="evidence" value="ECO:0000250"/>
    <property type="project" value="UniProtKB"/>
</dbReference>
<dbReference type="GO" id="GO:0044241">
    <property type="term" value="P:lipid digestion"/>
    <property type="evidence" value="ECO:0007669"/>
    <property type="project" value="Ensembl"/>
</dbReference>
<dbReference type="GO" id="GO:0072220">
    <property type="term" value="P:metanephric descending thin limb development"/>
    <property type="evidence" value="ECO:0007669"/>
    <property type="project" value="Ensembl"/>
</dbReference>
<dbReference type="GO" id="GO:0072239">
    <property type="term" value="P:metanephric glomerulus vasculature development"/>
    <property type="evidence" value="ECO:0007669"/>
    <property type="project" value="Ensembl"/>
</dbReference>
<dbReference type="GO" id="GO:0072232">
    <property type="term" value="P:metanephric proximal convoluted tubule segment 2 development"/>
    <property type="evidence" value="ECO:0007669"/>
    <property type="project" value="Ensembl"/>
</dbReference>
<dbReference type="GO" id="GO:0072230">
    <property type="term" value="P:metanephric proximal straight tubule development"/>
    <property type="evidence" value="ECO:0007669"/>
    <property type="project" value="Ensembl"/>
</dbReference>
<dbReference type="GO" id="GO:0043066">
    <property type="term" value="P:negative regulation of apoptotic process"/>
    <property type="evidence" value="ECO:0000250"/>
    <property type="project" value="UniProtKB"/>
</dbReference>
<dbReference type="GO" id="GO:0030185">
    <property type="term" value="P:nitric oxide transport"/>
    <property type="evidence" value="ECO:0000250"/>
    <property type="project" value="UniProtKB"/>
</dbReference>
<dbReference type="GO" id="GO:0042476">
    <property type="term" value="P:odontogenesis"/>
    <property type="evidence" value="ECO:0007669"/>
    <property type="project" value="Ensembl"/>
</dbReference>
<dbReference type="GO" id="GO:0030157">
    <property type="term" value="P:pancreatic juice secretion"/>
    <property type="evidence" value="ECO:0007669"/>
    <property type="project" value="Ensembl"/>
</dbReference>
<dbReference type="GO" id="GO:0045766">
    <property type="term" value="P:positive regulation of angiogenesis"/>
    <property type="evidence" value="ECO:0000250"/>
    <property type="project" value="UniProtKB"/>
</dbReference>
<dbReference type="GO" id="GO:0010763">
    <property type="term" value="P:positive regulation of fibroblast migration"/>
    <property type="evidence" value="ECO:0007669"/>
    <property type="project" value="Ensembl"/>
</dbReference>
<dbReference type="GO" id="GO:0048146">
    <property type="term" value="P:positive regulation of fibroblast proliferation"/>
    <property type="evidence" value="ECO:0000250"/>
    <property type="project" value="UniProtKB"/>
</dbReference>
<dbReference type="GO" id="GO:0046878">
    <property type="term" value="P:positive regulation of saliva secretion"/>
    <property type="evidence" value="ECO:0000250"/>
    <property type="project" value="UniProtKB"/>
</dbReference>
<dbReference type="GO" id="GO:0070295">
    <property type="term" value="P:renal water absorption"/>
    <property type="evidence" value="ECO:0007669"/>
    <property type="project" value="Ensembl"/>
</dbReference>
<dbReference type="GO" id="GO:0003097">
    <property type="term" value="P:renal water transport"/>
    <property type="evidence" value="ECO:0000250"/>
    <property type="project" value="UniProtKB"/>
</dbReference>
<dbReference type="GO" id="GO:0033363">
    <property type="term" value="P:secretory granule organization"/>
    <property type="evidence" value="ECO:0007669"/>
    <property type="project" value="Ensembl"/>
</dbReference>
<dbReference type="GO" id="GO:0019233">
    <property type="term" value="P:sensory perception of pain"/>
    <property type="evidence" value="ECO:0007669"/>
    <property type="project" value="Ensembl"/>
</dbReference>
<dbReference type="GO" id="GO:0035377">
    <property type="term" value="P:transepithelial water transport"/>
    <property type="evidence" value="ECO:0000250"/>
    <property type="project" value="UniProtKB"/>
</dbReference>
<dbReference type="GO" id="GO:0006833">
    <property type="term" value="P:water transport"/>
    <property type="evidence" value="ECO:0000250"/>
    <property type="project" value="UniProtKB"/>
</dbReference>
<dbReference type="GO" id="GO:0042060">
    <property type="term" value="P:wound healing"/>
    <property type="evidence" value="ECO:0007669"/>
    <property type="project" value="Ensembl"/>
</dbReference>
<dbReference type="CDD" id="cd00333">
    <property type="entry name" value="MIP"/>
    <property type="match status" value="1"/>
</dbReference>
<dbReference type="FunFam" id="1.20.1080.10:FF:000012">
    <property type="entry name" value="Aquaporin-1"/>
    <property type="match status" value="1"/>
</dbReference>
<dbReference type="Gene3D" id="1.20.1080.10">
    <property type="entry name" value="Glycerol uptake facilitator protein"/>
    <property type="match status" value="1"/>
</dbReference>
<dbReference type="InterPro" id="IPR023271">
    <property type="entry name" value="Aquaporin-like"/>
</dbReference>
<dbReference type="InterPro" id="IPR023274">
    <property type="entry name" value="Aquaporin_1"/>
</dbReference>
<dbReference type="InterPro" id="IPR034294">
    <property type="entry name" value="Aquaporin_transptr"/>
</dbReference>
<dbReference type="InterPro" id="IPR000425">
    <property type="entry name" value="MIP"/>
</dbReference>
<dbReference type="InterPro" id="IPR022357">
    <property type="entry name" value="MIP_CS"/>
</dbReference>
<dbReference type="NCBIfam" id="TIGR00861">
    <property type="entry name" value="MIP"/>
    <property type="match status" value="1"/>
</dbReference>
<dbReference type="PANTHER" id="PTHR19139">
    <property type="entry name" value="AQUAPORIN TRANSPORTER"/>
    <property type="match status" value="1"/>
</dbReference>
<dbReference type="PANTHER" id="PTHR19139:SF161">
    <property type="entry name" value="AQUAPORIN-1"/>
    <property type="match status" value="1"/>
</dbReference>
<dbReference type="Pfam" id="PF00230">
    <property type="entry name" value="MIP"/>
    <property type="match status" value="1"/>
</dbReference>
<dbReference type="PRINTS" id="PR02013">
    <property type="entry name" value="AQUAPORIN1"/>
</dbReference>
<dbReference type="PRINTS" id="PR00783">
    <property type="entry name" value="MINTRINSICP"/>
</dbReference>
<dbReference type="SUPFAM" id="SSF81338">
    <property type="entry name" value="Aquaporin-like"/>
    <property type="match status" value="1"/>
</dbReference>
<dbReference type="PROSITE" id="PS00221">
    <property type="entry name" value="MIP"/>
    <property type="match status" value="1"/>
</dbReference>
<gene>
    <name evidence="2" type="primary">AQP1</name>
</gene>
<protein>
    <recommendedName>
        <fullName evidence="2">Aquaporin-1</fullName>
        <shortName>AQP-1</shortName>
    </recommendedName>
    <alternativeName>
        <fullName>Aquaporin-CHIP</fullName>
    </alternativeName>
</protein>
<proteinExistence type="evidence at transcript level"/>
<reference key="1">
    <citation type="submission" date="2004-11" db="EMBL/GenBank/DDBJ databases">
        <authorList>
            <consortium name="The German cDNA consortium"/>
        </authorList>
    </citation>
    <scope>NUCLEOTIDE SEQUENCE [LARGE SCALE MRNA]</scope>
    <source>
        <tissue>Kidney</tissue>
    </source>
</reference>
<keyword id="KW-1003">Cell membrane</keyword>
<keyword id="KW-0325">Glycoprotein</keyword>
<keyword id="KW-0472">Membrane</keyword>
<keyword id="KW-0597">Phosphoprotein</keyword>
<keyword id="KW-1185">Reference proteome</keyword>
<keyword id="KW-0677">Repeat</keyword>
<keyword id="KW-0812">Transmembrane</keyword>
<keyword id="KW-1133">Transmembrane helix</keyword>
<keyword id="KW-0813">Transport</keyword>
<organism>
    <name type="scientific">Pongo abelii</name>
    <name type="common">Sumatran orangutan</name>
    <name type="synonym">Pongo pygmaeus abelii</name>
    <dbReference type="NCBI Taxonomy" id="9601"/>
    <lineage>
        <taxon>Eukaryota</taxon>
        <taxon>Metazoa</taxon>
        <taxon>Chordata</taxon>
        <taxon>Craniata</taxon>
        <taxon>Vertebrata</taxon>
        <taxon>Euteleostomi</taxon>
        <taxon>Mammalia</taxon>
        <taxon>Eutheria</taxon>
        <taxon>Euarchontoglires</taxon>
        <taxon>Primates</taxon>
        <taxon>Haplorrhini</taxon>
        <taxon>Catarrhini</taxon>
        <taxon>Hominidae</taxon>
        <taxon>Pongo</taxon>
    </lineage>
</organism>
<sequence>MASEFKKKLFWRAVVAEFLAMTLFVFISIGSALGFKYPVGNNQTAVQDNVKVSLAFGLSIATLAQSVGHISGAHLNPAVTLGLLLSCQISIFRALMYIIAQCVGAIVATAILSGITSSLPGNSLGRNDLADGVNSGQGLGIEIIGTLQLVLCVLATTDRRRRDLGGSAPLAIGLSVALGHLLAIDYTGCGINPARSFGSAVITHNFSNHWIFWVGPFIGGALAVLIYDFILAPRSSDFTDRVKVWTSGQVEEYDLDADDINSRVEMKPK</sequence>
<accession>Q5R819</accession>